<accession>A1DES4</accession>
<feature type="chain" id="PRO_0000289718" description="Mitogen-activated protein kinase mpkC">
    <location>
        <begin position="1"/>
        <end position="377"/>
    </location>
</feature>
<feature type="domain" description="Protein kinase" evidence="2">
    <location>
        <begin position="20"/>
        <end position="299"/>
    </location>
</feature>
<feature type="short sequence motif" description="TXY">
    <location>
        <begin position="171"/>
        <end position="173"/>
    </location>
</feature>
<feature type="active site" description="Proton acceptor" evidence="2 3">
    <location>
        <position position="141"/>
    </location>
</feature>
<feature type="binding site" evidence="2">
    <location>
        <begin position="26"/>
        <end position="34"/>
    </location>
    <ligand>
        <name>ATP</name>
        <dbReference type="ChEBI" id="CHEBI:30616"/>
    </ligand>
</feature>
<feature type="binding site" evidence="2">
    <location>
        <position position="49"/>
    </location>
    <ligand>
        <name>ATP</name>
        <dbReference type="ChEBI" id="CHEBI:30616"/>
    </ligand>
</feature>
<feature type="modified residue" description="Phosphothreonine" evidence="1">
    <location>
        <position position="171"/>
    </location>
</feature>
<feature type="modified residue" description="Phosphotyrosine" evidence="1">
    <location>
        <position position="173"/>
    </location>
</feature>
<protein>
    <recommendedName>
        <fullName>Mitogen-activated protein kinase mpkC</fullName>
        <shortName>MAP kinase C</shortName>
        <ecNumber>2.7.11.24</ecNumber>
    </recommendedName>
</protein>
<reference key="1">
    <citation type="journal article" date="2008" name="PLoS Genet.">
        <title>Genomic islands in the pathogenic filamentous fungus Aspergillus fumigatus.</title>
        <authorList>
            <person name="Fedorova N.D."/>
            <person name="Khaldi N."/>
            <person name="Joardar V.S."/>
            <person name="Maiti R."/>
            <person name="Amedeo P."/>
            <person name="Anderson M.J."/>
            <person name="Crabtree J."/>
            <person name="Silva J.C."/>
            <person name="Badger J.H."/>
            <person name="Albarraq A."/>
            <person name="Angiuoli S."/>
            <person name="Bussey H."/>
            <person name="Bowyer P."/>
            <person name="Cotty P.J."/>
            <person name="Dyer P.S."/>
            <person name="Egan A."/>
            <person name="Galens K."/>
            <person name="Fraser-Liggett C.M."/>
            <person name="Haas B.J."/>
            <person name="Inman J.M."/>
            <person name="Kent R."/>
            <person name="Lemieux S."/>
            <person name="Malavazi I."/>
            <person name="Orvis J."/>
            <person name="Roemer T."/>
            <person name="Ronning C.M."/>
            <person name="Sundaram J.P."/>
            <person name="Sutton G."/>
            <person name="Turner G."/>
            <person name="Venter J.C."/>
            <person name="White O.R."/>
            <person name="Whitty B.R."/>
            <person name="Youngman P."/>
            <person name="Wolfe K.H."/>
            <person name="Goldman G.H."/>
            <person name="Wortman J.R."/>
            <person name="Jiang B."/>
            <person name="Denning D.W."/>
            <person name="Nierman W.C."/>
        </authorList>
    </citation>
    <scope>NUCLEOTIDE SEQUENCE [LARGE SCALE GENOMIC DNA]</scope>
    <source>
        <strain>ATCC 1020 / DSM 3700 / CBS 544.65 / FGSC A1164 / JCM 1740 / NRRL 181 / WB 181</strain>
    </source>
</reference>
<evidence type="ECO:0000250" key="1"/>
<evidence type="ECO:0000255" key="2">
    <source>
        <dbReference type="PROSITE-ProRule" id="PRU00159"/>
    </source>
</evidence>
<evidence type="ECO:0000255" key="3">
    <source>
        <dbReference type="PROSITE-ProRule" id="PRU10027"/>
    </source>
</evidence>
<evidence type="ECO:0000305" key="4"/>
<comment type="function">
    <text evidence="1">Mitogen-activated protein kinase required for growth on media where sorbitol or mannitol is the sole carbon source.</text>
</comment>
<comment type="catalytic activity">
    <reaction>
        <text>L-seryl-[protein] + ATP = O-phospho-L-seryl-[protein] + ADP + H(+)</text>
        <dbReference type="Rhea" id="RHEA:17989"/>
        <dbReference type="Rhea" id="RHEA-COMP:9863"/>
        <dbReference type="Rhea" id="RHEA-COMP:11604"/>
        <dbReference type="ChEBI" id="CHEBI:15378"/>
        <dbReference type="ChEBI" id="CHEBI:29999"/>
        <dbReference type="ChEBI" id="CHEBI:30616"/>
        <dbReference type="ChEBI" id="CHEBI:83421"/>
        <dbReference type="ChEBI" id="CHEBI:456216"/>
        <dbReference type="EC" id="2.7.11.24"/>
    </reaction>
</comment>
<comment type="catalytic activity">
    <reaction>
        <text>L-threonyl-[protein] + ATP = O-phospho-L-threonyl-[protein] + ADP + H(+)</text>
        <dbReference type="Rhea" id="RHEA:46608"/>
        <dbReference type="Rhea" id="RHEA-COMP:11060"/>
        <dbReference type="Rhea" id="RHEA-COMP:11605"/>
        <dbReference type="ChEBI" id="CHEBI:15378"/>
        <dbReference type="ChEBI" id="CHEBI:30013"/>
        <dbReference type="ChEBI" id="CHEBI:30616"/>
        <dbReference type="ChEBI" id="CHEBI:61977"/>
        <dbReference type="ChEBI" id="CHEBI:456216"/>
        <dbReference type="EC" id="2.7.11.24"/>
    </reaction>
</comment>
<comment type="cofactor">
    <cofactor evidence="1">
        <name>Mg(2+)</name>
        <dbReference type="ChEBI" id="CHEBI:18420"/>
    </cofactor>
</comment>
<comment type="activity regulation">
    <text evidence="1">Activated by tyrosine and threonine phosphorylation.</text>
</comment>
<comment type="domain">
    <text>The TXY motif contains the threonine and tyrosine residues whose phosphorylation activates the MAP kinases.</text>
</comment>
<comment type="PTM">
    <text evidence="1">Dually phosphorylated on Thr-171 and Tyr-173, which activates the enzyme.</text>
</comment>
<comment type="similarity">
    <text evidence="2">Belongs to the protein kinase superfamily. Ser/Thr protein kinase family. MAP kinase subfamily. HOG1 sub-subfamily.</text>
</comment>
<comment type="sequence caution" evidence="4">
    <conflict type="erroneous gene model prediction">
        <sequence resource="EMBL-CDS" id="EAW17881"/>
    </conflict>
</comment>
<keyword id="KW-0067">ATP-binding</keyword>
<keyword id="KW-0418">Kinase</keyword>
<keyword id="KW-0547">Nucleotide-binding</keyword>
<keyword id="KW-0597">Phosphoprotein</keyword>
<keyword id="KW-1185">Reference proteome</keyword>
<keyword id="KW-0723">Serine/threonine-protein kinase</keyword>
<keyword id="KW-0808">Transferase</keyword>
<gene>
    <name type="primary">mpkc</name>
    <name type="ORF">NFIA_078210</name>
</gene>
<sequence>MAEFVRAEILGTKFEYTTRYVNPQPIGMGSFGLVCSAFDQITQQPVALKKIMKPFDSSSLAKRTYREIRLLKYLRHENLICLRDIFISPLEDIYIATELLGTDLGRLLSIKPLDSKFSQYFIYQILRGLKYIHSANVIHRDLKPTNILINENCDLKICDFGLARLQEPQMTGYVATRYYRAPEIMLTWQRYGVQVDVWSAGCILAEMLRGKPLFPGKDHVHQFHLITNVLGNPPDAVIEKITSKNTVNFVKSLPSREPRDLSTVIMTHTSIAIDLLKKMLVIDPDTRISAQDALRHPYLAPYHDPTDEPAASGPFDWSFDSADFPKETWKIMIYSEVLDYLNVGNPADPAPFDPSTPFDPSALEREFSEFLSDSGQI</sequence>
<dbReference type="EC" id="2.7.11.24"/>
<dbReference type="EMBL" id="DS027696">
    <property type="protein sequence ID" value="EAW17881.1"/>
    <property type="status" value="ALT_SEQ"/>
    <property type="molecule type" value="Genomic_DNA"/>
</dbReference>
<dbReference type="RefSeq" id="XP_001259778.1">
    <property type="nucleotide sequence ID" value="XM_001259777.1"/>
</dbReference>
<dbReference type="SMR" id="A1DES4"/>
<dbReference type="STRING" id="331117.A1DES4"/>
<dbReference type="GeneID" id="4586381"/>
<dbReference type="KEGG" id="nfi:NFIA_078210"/>
<dbReference type="VEuPathDB" id="FungiDB:NFIA_078210"/>
<dbReference type="eggNOG" id="KOG0660">
    <property type="taxonomic scope" value="Eukaryota"/>
</dbReference>
<dbReference type="OrthoDB" id="192887at2759"/>
<dbReference type="Proteomes" id="UP000006702">
    <property type="component" value="Unassembled WGS sequence"/>
</dbReference>
<dbReference type="GO" id="GO:0005524">
    <property type="term" value="F:ATP binding"/>
    <property type="evidence" value="ECO:0007669"/>
    <property type="project" value="UniProtKB-KW"/>
</dbReference>
<dbReference type="GO" id="GO:0004707">
    <property type="term" value="F:MAP kinase activity"/>
    <property type="evidence" value="ECO:0007669"/>
    <property type="project" value="UniProtKB-EC"/>
</dbReference>
<dbReference type="GO" id="GO:0106310">
    <property type="term" value="F:protein serine kinase activity"/>
    <property type="evidence" value="ECO:0007669"/>
    <property type="project" value="RHEA"/>
</dbReference>
<dbReference type="FunFam" id="1.10.510.10:FF:000049">
    <property type="entry name" value="Mitogen-activated protein kinase"/>
    <property type="match status" value="1"/>
</dbReference>
<dbReference type="FunFam" id="3.30.200.20:FF:000046">
    <property type="entry name" value="Mitogen-activated protein kinase"/>
    <property type="match status" value="1"/>
</dbReference>
<dbReference type="Gene3D" id="3.30.200.20">
    <property type="entry name" value="Phosphorylase Kinase, domain 1"/>
    <property type="match status" value="1"/>
</dbReference>
<dbReference type="Gene3D" id="1.10.510.10">
    <property type="entry name" value="Transferase(Phosphotransferase) domain 1"/>
    <property type="match status" value="1"/>
</dbReference>
<dbReference type="InterPro" id="IPR011009">
    <property type="entry name" value="Kinase-like_dom_sf"/>
</dbReference>
<dbReference type="InterPro" id="IPR050117">
    <property type="entry name" value="MAP_kinase"/>
</dbReference>
<dbReference type="InterPro" id="IPR003527">
    <property type="entry name" value="MAP_kinase_CS"/>
</dbReference>
<dbReference type="InterPro" id="IPR000719">
    <property type="entry name" value="Prot_kinase_dom"/>
</dbReference>
<dbReference type="InterPro" id="IPR017441">
    <property type="entry name" value="Protein_kinase_ATP_BS"/>
</dbReference>
<dbReference type="InterPro" id="IPR008271">
    <property type="entry name" value="Ser/Thr_kinase_AS"/>
</dbReference>
<dbReference type="PANTHER" id="PTHR24055">
    <property type="entry name" value="MITOGEN-ACTIVATED PROTEIN KINASE"/>
    <property type="match status" value="1"/>
</dbReference>
<dbReference type="Pfam" id="PF00069">
    <property type="entry name" value="Pkinase"/>
    <property type="match status" value="1"/>
</dbReference>
<dbReference type="SMART" id="SM00220">
    <property type="entry name" value="S_TKc"/>
    <property type="match status" value="1"/>
</dbReference>
<dbReference type="SUPFAM" id="SSF56112">
    <property type="entry name" value="Protein kinase-like (PK-like)"/>
    <property type="match status" value="1"/>
</dbReference>
<dbReference type="PROSITE" id="PS01351">
    <property type="entry name" value="MAPK"/>
    <property type="match status" value="1"/>
</dbReference>
<dbReference type="PROSITE" id="PS00107">
    <property type="entry name" value="PROTEIN_KINASE_ATP"/>
    <property type="match status" value="1"/>
</dbReference>
<dbReference type="PROSITE" id="PS50011">
    <property type="entry name" value="PROTEIN_KINASE_DOM"/>
    <property type="match status" value="1"/>
</dbReference>
<dbReference type="PROSITE" id="PS00108">
    <property type="entry name" value="PROTEIN_KINASE_ST"/>
    <property type="match status" value="1"/>
</dbReference>
<proteinExistence type="inferred from homology"/>
<organism>
    <name type="scientific">Neosartorya fischeri (strain ATCC 1020 / DSM 3700 / CBS 544.65 / FGSC A1164 / JCM 1740 / NRRL 181 / WB 181)</name>
    <name type="common">Aspergillus fischerianus</name>
    <dbReference type="NCBI Taxonomy" id="331117"/>
    <lineage>
        <taxon>Eukaryota</taxon>
        <taxon>Fungi</taxon>
        <taxon>Dikarya</taxon>
        <taxon>Ascomycota</taxon>
        <taxon>Pezizomycotina</taxon>
        <taxon>Eurotiomycetes</taxon>
        <taxon>Eurotiomycetidae</taxon>
        <taxon>Eurotiales</taxon>
        <taxon>Aspergillaceae</taxon>
        <taxon>Aspergillus</taxon>
        <taxon>Aspergillus subgen. Fumigati</taxon>
    </lineage>
</organism>
<name>MPKC_NEOFI</name>